<reference key="1">
    <citation type="journal article" date="2002" name="Environ. Microbiol.">
        <title>Complete genome sequence and comparative analysis of the metabolically versatile Pseudomonas putida KT2440.</title>
        <authorList>
            <person name="Nelson K.E."/>
            <person name="Weinel C."/>
            <person name="Paulsen I.T."/>
            <person name="Dodson R.J."/>
            <person name="Hilbert H."/>
            <person name="Martins dos Santos V.A.P."/>
            <person name="Fouts D.E."/>
            <person name="Gill S.R."/>
            <person name="Pop M."/>
            <person name="Holmes M."/>
            <person name="Brinkac L.M."/>
            <person name="Beanan M.J."/>
            <person name="DeBoy R.T."/>
            <person name="Daugherty S.C."/>
            <person name="Kolonay J.F."/>
            <person name="Madupu R."/>
            <person name="Nelson W.C."/>
            <person name="White O."/>
            <person name="Peterson J.D."/>
            <person name="Khouri H.M."/>
            <person name="Hance I."/>
            <person name="Chris Lee P."/>
            <person name="Holtzapple E.K."/>
            <person name="Scanlan D."/>
            <person name="Tran K."/>
            <person name="Moazzez A."/>
            <person name="Utterback T.R."/>
            <person name="Rizzo M."/>
            <person name="Lee K."/>
            <person name="Kosack D."/>
            <person name="Moestl D."/>
            <person name="Wedler H."/>
            <person name="Lauber J."/>
            <person name="Stjepandic D."/>
            <person name="Hoheisel J."/>
            <person name="Straetz M."/>
            <person name="Heim S."/>
            <person name="Kiewitz C."/>
            <person name="Eisen J.A."/>
            <person name="Timmis K.N."/>
            <person name="Duesterhoeft A."/>
            <person name="Tuemmler B."/>
            <person name="Fraser C.M."/>
        </authorList>
    </citation>
    <scope>NUCLEOTIDE SEQUENCE [LARGE SCALE GENOMIC DNA]</scope>
    <source>
        <strain>ATCC 47054 / DSM 6125 / CFBP 8728 / NCIMB 11950 / KT2440</strain>
    </source>
</reference>
<protein>
    <recommendedName>
        <fullName evidence="1">Adenylate kinase</fullName>
        <shortName evidence="1">AK</shortName>
        <ecNumber evidence="1">2.7.4.3</ecNumber>
    </recommendedName>
    <alternativeName>
        <fullName evidence="1">ATP-AMP transphosphorylase</fullName>
    </alternativeName>
    <alternativeName>
        <fullName evidence="1">ATP:AMP phosphotransferase</fullName>
    </alternativeName>
    <alternativeName>
        <fullName evidence="1">Adenylate monophosphate kinase</fullName>
    </alternativeName>
</protein>
<sequence length="216" mass="23223">MRVILLGAPGAGKGTQAKFITEKFGIPQISTGDMLRAAVKAGTPLGLELKKVMDAGQLVSDELIISLVKERIAQPDCANGCLFDGFPRTIPQAEAMVAAGVDIDAVVEIAVDDEEIVGRMAGRRVHLASGRTYHIQYNPPKVEGKDDETGEDLIQRDDDKEETVRHRLSVYHSQTKPLVDFYQKLSAANGGKPKYSHIEGVGSVEAITAKVLAALS</sequence>
<keyword id="KW-0067">ATP-binding</keyword>
<keyword id="KW-0963">Cytoplasm</keyword>
<keyword id="KW-0418">Kinase</keyword>
<keyword id="KW-0545">Nucleotide biosynthesis</keyword>
<keyword id="KW-0547">Nucleotide-binding</keyword>
<keyword id="KW-1185">Reference proteome</keyword>
<keyword id="KW-0808">Transferase</keyword>
<proteinExistence type="inferred from homology"/>
<gene>
    <name evidence="1" type="primary">adk</name>
    <name type="ordered locus">PP_1506</name>
</gene>
<accession>P0A136</accession>
<accession>Q9Z409</accession>
<dbReference type="EC" id="2.7.4.3" evidence="1"/>
<dbReference type="EMBL" id="AE015451">
    <property type="protein sequence ID" value="AAN67127.1"/>
    <property type="molecule type" value="Genomic_DNA"/>
</dbReference>
<dbReference type="RefSeq" id="NP_743663.1">
    <property type="nucleotide sequence ID" value="NC_002947.4"/>
</dbReference>
<dbReference type="RefSeq" id="WP_004575467.1">
    <property type="nucleotide sequence ID" value="NZ_CP169744.1"/>
</dbReference>
<dbReference type="SMR" id="P0A136"/>
<dbReference type="STRING" id="160488.PP_1506"/>
<dbReference type="PaxDb" id="160488-PP_1506"/>
<dbReference type="GeneID" id="83681960"/>
<dbReference type="KEGG" id="ppu:PP_1506"/>
<dbReference type="PATRIC" id="fig|160488.4.peg.1597"/>
<dbReference type="eggNOG" id="COG0563">
    <property type="taxonomic scope" value="Bacteria"/>
</dbReference>
<dbReference type="HOGENOM" id="CLU_032354_1_2_6"/>
<dbReference type="OrthoDB" id="9805030at2"/>
<dbReference type="PhylomeDB" id="P0A136"/>
<dbReference type="BioCyc" id="PPUT160488:G1G01-1597-MONOMER"/>
<dbReference type="UniPathway" id="UPA00588">
    <property type="reaction ID" value="UER00649"/>
</dbReference>
<dbReference type="Proteomes" id="UP000000556">
    <property type="component" value="Chromosome"/>
</dbReference>
<dbReference type="GO" id="GO:0005737">
    <property type="term" value="C:cytoplasm"/>
    <property type="evidence" value="ECO:0007669"/>
    <property type="project" value="UniProtKB-SubCell"/>
</dbReference>
<dbReference type="GO" id="GO:0004017">
    <property type="term" value="F:adenylate kinase activity"/>
    <property type="evidence" value="ECO:0007669"/>
    <property type="project" value="UniProtKB-UniRule"/>
</dbReference>
<dbReference type="GO" id="GO:0005524">
    <property type="term" value="F:ATP binding"/>
    <property type="evidence" value="ECO:0007669"/>
    <property type="project" value="UniProtKB-UniRule"/>
</dbReference>
<dbReference type="GO" id="GO:0044209">
    <property type="term" value="P:AMP salvage"/>
    <property type="evidence" value="ECO:0007669"/>
    <property type="project" value="UniProtKB-UniRule"/>
</dbReference>
<dbReference type="CDD" id="cd01428">
    <property type="entry name" value="ADK"/>
    <property type="match status" value="1"/>
</dbReference>
<dbReference type="FunFam" id="3.40.50.300:FF:000106">
    <property type="entry name" value="Adenylate kinase mitochondrial"/>
    <property type="match status" value="1"/>
</dbReference>
<dbReference type="Gene3D" id="3.40.50.300">
    <property type="entry name" value="P-loop containing nucleotide triphosphate hydrolases"/>
    <property type="match status" value="1"/>
</dbReference>
<dbReference type="HAMAP" id="MF_00235">
    <property type="entry name" value="Adenylate_kinase_Adk"/>
    <property type="match status" value="1"/>
</dbReference>
<dbReference type="InterPro" id="IPR006259">
    <property type="entry name" value="Adenyl_kin_sub"/>
</dbReference>
<dbReference type="InterPro" id="IPR000850">
    <property type="entry name" value="Adenylat/UMP-CMP_kin"/>
</dbReference>
<dbReference type="InterPro" id="IPR033690">
    <property type="entry name" value="Adenylat_kinase_CS"/>
</dbReference>
<dbReference type="InterPro" id="IPR007862">
    <property type="entry name" value="Adenylate_kinase_lid-dom"/>
</dbReference>
<dbReference type="InterPro" id="IPR027417">
    <property type="entry name" value="P-loop_NTPase"/>
</dbReference>
<dbReference type="NCBIfam" id="TIGR01351">
    <property type="entry name" value="adk"/>
    <property type="match status" value="1"/>
</dbReference>
<dbReference type="NCBIfam" id="NF001379">
    <property type="entry name" value="PRK00279.1-1"/>
    <property type="match status" value="1"/>
</dbReference>
<dbReference type="NCBIfam" id="NF001380">
    <property type="entry name" value="PRK00279.1-2"/>
    <property type="match status" value="1"/>
</dbReference>
<dbReference type="NCBIfam" id="NF001381">
    <property type="entry name" value="PRK00279.1-3"/>
    <property type="match status" value="1"/>
</dbReference>
<dbReference type="NCBIfam" id="NF011100">
    <property type="entry name" value="PRK14527.1"/>
    <property type="match status" value="1"/>
</dbReference>
<dbReference type="PANTHER" id="PTHR23359">
    <property type="entry name" value="NUCLEOTIDE KINASE"/>
    <property type="match status" value="1"/>
</dbReference>
<dbReference type="Pfam" id="PF00406">
    <property type="entry name" value="ADK"/>
    <property type="match status" value="1"/>
</dbReference>
<dbReference type="Pfam" id="PF05191">
    <property type="entry name" value="ADK_lid"/>
    <property type="match status" value="1"/>
</dbReference>
<dbReference type="PRINTS" id="PR00094">
    <property type="entry name" value="ADENYLTKNASE"/>
</dbReference>
<dbReference type="SUPFAM" id="SSF52540">
    <property type="entry name" value="P-loop containing nucleoside triphosphate hydrolases"/>
    <property type="match status" value="1"/>
</dbReference>
<dbReference type="PROSITE" id="PS00113">
    <property type="entry name" value="ADENYLATE_KINASE"/>
    <property type="match status" value="1"/>
</dbReference>
<comment type="function">
    <text evidence="1">Catalyzes the reversible transfer of the terminal phosphate group between ATP and AMP. Plays an important role in cellular energy homeostasis and in adenine nucleotide metabolism.</text>
</comment>
<comment type="catalytic activity">
    <reaction evidence="1">
        <text>AMP + ATP = 2 ADP</text>
        <dbReference type="Rhea" id="RHEA:12973"/>
        <dbReference type="ChEBI" id="CHEBI:30616"/>
        <dbReference type="ChEBI" id="CHEBI:456215"/>
        <dbReference type="ChEBI" id="CHEBI:456216"/>
        <dbReference type="EC" id="2.7.4.3"/>
    </reaction>
</comment>
<comment type="pathway">
    <text evidence="1">Purine metabolism; AMP biosynthesis via salvage pathway; AMP from ADP: step 1/1.</text>
</comment>
<comment type="subunit">
    <text evidence="1">Monomer.</text>
</comment>
<comment type="subcellular location">
    <subcellularLocation>
        <location evidence="1">Cytoplasm</location>
    </subcellularLocation>
</comment>
<comment type="domain">
    <text evidence="1">Consists of three domains, a large central CORE domain and two small peripheral domains, NMPbind and LID, which undergo movements during catalysis. The LID domain closes over the site of phosphoryl transfer upon ATP binding. Assembling and dissambling the active center during each catalytic cycle provides an effective means to prevent ATP hydrolysis.</text>
</comment>
<comment type="similarity">
    <text evidence="1">Belongs to the adenylate kinase family.</text>
</comment>
<organism>
    <name type="scientific">Pseudomonas putida (strain ATCC 47054 / DSM 6125 / CFBP 8728 / NCIMB 11950 / KT2440)</name>
    <dbReference type="NCBI Taxonomy" id="160488"/>
    <lineage>
        <taxon>Bacteria</taxon>
        <taxon>Pseudomonadati</taxon>
        <taxon>Pseudomonadota</taxon>
        <taxon>Gammaproteobacteria</taxon>
        <taxon>Pseudomonadales</taxon>
        <taxon>Pseudomonadaceae</taxon>
        <taxon>Pseudomonas</taxon>
    </lineage>
</organism>
<evidence type="ECO:0000255" key="1">
    <source>
        <dbReference type="HAMAP-Rule" id="MF_00235"/>
    </source>
</evidence>
<name>KAD_PSEPK</name>
<feature type="chain" id="PRO_0000158831" description="Adenylate kinase">
    <location>
        <begin position="1"/>
        <end position="216"/>
    </location>
</feature>
<feature type="region of interest" description="NMP" evidence="1">
    <location>
        <begin position="30"/>
        <end position="59"/>
    </location>
</feature>
<feature type="region of interest" description="LID" evidence="1">
    <location>
        <begin position="122"/>
        <end position="159"/>
    </location>
</feature>
<feature type="binding site" evidence="1">
    <location>
        <begin position="10"/>
        <end position="15"/>
    </location>
    <ligand>
        <name>ATP</name>
        <dbReference type="ChEBI" id="CHEBI:30616"/>
    </ligand>
</feature>
<feature type="binding site" evidence="1">
    <location>
        <position position="31"/>
    </location>
    <ligand>
        <name>AMP</name>
        <dbReference type="ChEBI" id="CHEBI:456215"/>
    </ligand>
</feature>
<feature type="binding site" evidence="1">
    <location>
        <position position="36"/>
    </location>
    <ligand>
        <name>AMP</name>
        <dbReference type="ChEBI" id="CHEBI:456215"/>
    </ligand>
</feature>
<feature type="binding site" evidence="1">
    <location>
        <begin position="57"/>
        <end position="59"/>
    </location>
    <ligand>
        <name>AMP</name>
        <dbReference type="ChEBI" id="CHEBI:456215"/>
    </ligand>
</feature>
<feature type="binding site" evidence="1">
    <location>
        <begin position="85"/>
        <end position="88"/>
    </location>
    <ligand>
        <name>AMP</name>
        <dbReference type="ChEBI" id="CHEBI:456215"/>
    </ligand>
</feature>
<feature type="binding site" evidence="1">
    <location>
        <position position="92"/>
    </location>
    <ligand>
        <name>AMP</name>
        <dbReference type="ChEBI" id="CHEBI:456215"/>
    </ligand>
</feature>
<feature type="binding site" evidence="1">
    <location>
        <position position="123"/>
    </location>
    <ligand>
        <name>ATP</name>
        <dbReference type="ChEBI" id="CHEBI:30616"/>
    </ligand>
</feature>
<feature type="binding site" evidence="1">
    <location>
        <begin position="132"/>
        <end position="133"/>
    </location>
    <ligand>
        <name>ATP</name>
        <dbReference type="ChEBI" id="CHEBI:30616"/>
    </ligand>
</feature>
<feature type="binding site" evidence="1">
    <location>
        <position position="156"/>
    </location>
    <ligand>
        <name>AMP</name>
        <dbReference type="ChEBI" id="CHEBI:456215"/>
    </ligand>
</feature>
<feature type="binding site" evidence="1">
    <location>
        <position position="167"/>
    </location>
    <ligand>
        <name>AMP</name>
        <dbReference type="ChEBI" id="CHEBI:456215"/>
    </ligand>
</feature>
<feature type="binding site" evidence="1">
    <location>
        <position position="202"/>
    </location>
    <ligand>
        <name>ATP</name>
        <dbReference type="ChEBI" id="CHEBI:30616"/>
    </ligand>
</feature>